<proteinExistence type="inferred from homology"/>
<dbReference type="EC" id="2.7.4.6" evidence="1"/>
<dbReference type="EMBL" id="BX950851">
    <property type="protein sequence ID" value="CAG76122.1"/>
    <property type="molecule type" value="Genomic_DNA"/>
</dbReference>
<dbReference type="RefSeq" id="WP_011094745.1">
    <property type="nucleotide sequence ID" value="NC_004547.2"/>
</dbReference>
<dbReference type="SMR" id="Q6D272"/>
<dbReference type="STRING" id="218491.ECA3224"/>
<dbReference type="KEGG" id="eca:ECA3224"/>
<dbReference type="PATRIC" id="fig|218491.5.peg.3266"/>
<dbReference type="eggNOG" id="COG0105">
    <property type="taxonomic scope" value="Bacteria"/>
</dbReference>
<dbReference type="HOGENOM" id="CLU_060216_8_1_6"/>
<dbReference type="OrthoDB" id="9801161at2"/>
<dbReference type="Proteomes" id="UP000007966">
    <property type="component" value="Chromosome"/>
</dbReference>
<dbReference type="GO" id="GO:0005737">
    <property type="term" value="C:cytoplasm"/>
    <property type="evidence" value="ECO:0007669"/>
    <property type="project" value="UniProtKB-SubCell"/>
</dbReference>
<dbReference type="GO" id="GO:0005524">
    <property type="term" value="F:ATP binding"/>
    <property type="evidence" value="ECO:0007669"/>
    <property type="project" value="UniProtKB-UniRule"/>
</dbReference>
<dbReference type="GO" id="GO:0046872">
    <property type="term" value="F:metal ion binding"/>
    <property type="evidence" value="ECO:0007669"/>
    <property type="project" value="UniProtKB-KW"/>
</dbReference>
<dbReference type="GO" id="GO:0004550">
    <property type="term" value="F:nucleoside diphosphate kinase activity"/>
    <property type="evidence" value="ECO:0007669"/>
    <property type="project" value="UniProtKB-UniRule"/>
</dbReference>
<dbReference type="GO" id="GO:0006241">
    <property type="term" value="P:CTP biosynthetic process"/>
    <property type="evidence" value="ECO:0007669"/>
    <property type="project" value="UniProtKB-UniRule"/>
</dbReference>
<dbReference type="GO" id="GO:0006183">
    <property type="term" value="P:GTP biosynthetic process"/>
    <property type="evidence" value="ECO:0007669"/>
    <property type="project" value="UniProtKB-UniRule"/>
</dbReference>
<dbReference type="GO" id="GO:0006228">
    <property type="term" value="P:UTP biosynthetic process"/>
    <property type="evidence" value="ECO:0007669"/>
    <property type="project" value="UniProtKB-UniRule"/>
</dbReference>
<dbReference type="CDD" id="cd04413">
    <property type="entry name" value="NDPk_I"/>
    <property type="match status" value="1"/>
</dbReference>
<dbReference type="FunFam" id="3.30.70.141:FF:000001">
    <property type="entry name" value="Nucleoside diphosphate kinase"/>
    <property type="match status" value="1"/>
</dbReference>
<dbReference type="Gene3D" id="3.30.70.141">
    <property type="entry name" value="Nucleoside diphosphate kinase-like domain"/>
    <property type="match status" value="1"/>
</dbReference>
<dbReference type="HAMAP" id="MF_00451">
    <property type="entry name" value="NDP_kinase"/>
    <property type="match status" value="1"/>
</dbReference>
<dbReference type="InterPro" id="IPR034907">
    <property type="entry name" value="NDK-like_dom"/>
</dbReference>
<dbReference type="InterPro" id="IPR036850">
    <property type="entry name" value="NDK-like_dom_sf"/>
</dbReference>
<dbReference type="InterPro" id="IPR001564">
    <property type="entry name" value="Nucleoside_diP_kinase"/>
</dbReference>
<dbReference type="InterPro" id="IPR023005">
    <property type="entry name" value="Nucleoside_diP_kinase_AS"/>
</dbReference>
<dbReference type="NCBIfam" id="NF001908">
    <property type="entry name" value="PRK00668.1"/>
    <property type="match status" value="1"/>
</dbReference>
<dbReference type="PANTHER" id="PTHR46161">
    <property type="entry name" value="NUCLEOSIDE DIPHOSPHATE KINASE"/>
    <property type="match status" value="1"/>
</dbReference>
<dbReference type="PANTHER" id="PTHR46161:SF3">
    <property type="entry name" value="NUCLEOSIDE DIPHOSPHATE KINASE DDB_G0292928-RELATED"/>
    <property type="match status" value="1"/>
</dbReference>
<dbReference type="Pfam" id="PF00334">
    <property type="entry name" value="NDK"/>
    <property type="match status" value="1"/>
</dbReference>
<dbReference type="PRINTS" id="PR01243">
    <property type="entry name" value="NUCDPKINASE"/>
</dbReference>
<dbReference type="SMART" id="SM00562">
    <property type="entry name" value="NDK"/>
    <property type="match status" value="1"/>
</dbReference>
<dbReference type="SUPFAM" id="SSF54919">
    <property type="entry name" value="Nucleoside diphosphate kinase, NDK"/>
    <property type="match status" value="1"/>
</dbReference>
<dbReference type="PROSITE" id="PS00469">
    <property type="entry name" value="NDPK"/>
    <property type="match status" value="1"/>
</dbReference>
<dbReference type="PROSITE" id="PS51374">
    <property type="entry name" value="NDPK_LIKE"/>
    <property type="match status" value="1"/>
</dbReference>
<sequence length="142" mass="15492">MTIERTFSIVKPNAVAKNAIGAIYARFESAGFTIVASKMLRLSREQAEGFYAEHKGKPFFDGLVEFMMSGPIMVQALEGENAVQRNRDIMGATNPANALAGTLRADYADSFTANAVHGSDSIESAQREIAYFFSDDEICPRA</sequence>
<organism>
    <name type="scientific">Pectobacterium atrosepticum (strain SCRI 1043 / ATCC BAA-672)</name>
    <name type="common">Erwinia carotovora subsp. atroseptica</name>
    <dbReference type="NCBI Taxonomy" id="218491"/>
    <lineage>
        <taxon>Bacteria</taxon>
        <taxon>Pseudomonadati</taxon>
        <taxon>Pseudomonadota</taxon>
        <taxon>Gammaproteobacteria</taxon>
        <taxon>Enterobacterales</taxon>
        <taxon>Pectobacteriaceae</taxon>
        <taxon>Pectobacterium</taxon>
    </lineage>
</organism>
<reference key="1">
    <citation type="journal article" date="2004" name="Proc. Natl. Acad. Sci. U.S.A.">
        <title>Genome sequence of the enterobacterial phytopathogen Erwinia carotovora subsp. atroseptica and characterization of virulence factors.</title>
        <authorList>
            <person name="Bell K.S."/>
            <person name="Sebaihia M."/>
            <person name="Pritchard L."/>
            <person name="Holden M.T.G."/>
            <person name="Hyman L.J."/>
            <person name="Holeva M.C."/>
            <person name="Thomson N.R."/>
            <person name="Bentley S.D."/>
            <person name="Churcher L.J.C."/>
            <person name="Mungall K."/>
            <person name="Atkin R."/>
            <person name="Bason N."/>
            <person name="Brooks K."/>
            <person name="Chillingworth T."/>
            <person name="Clark K."/>
            <person name="Doggett J."/>
            <person name="Fraser A."/>
            <person name="Hance Z."/>
            <person name="Hauser H."/>
            <person name="Jagels K."/>
            <person name="Moule S."/>
            <person name="Norbertczak H."/>
            <person name="Ormond D."/>
            <person name="Price C."/>
            <person name="Quail M.A."/>
            <person name="Sanders M."/>
            <person name="Walker D."/>
            <person name="Whitehead S."/>
            <person name="Salmond G.P.C."/>
            <person name="Birch P.R.J."/>
            <person name="Parkhill J."/>
            <person name="Toth I.K."/>
        </authorList>
    </citation>
    <scope>NUCLEOTIDE SEQUENCE [LARGE SCALE GENOMIC DNA]</scope>
    <source>
        <strain>SCRI 1043 / ATCC BAA-672</strain>
    </source>
</reference>
<comment type="function">
    <text evidence="1">Major role in the synthesis of nucleoside triphosphates other than ATP. The ATP gamma phosphate is transferred to the NDP beta phosphate via a ping-pong mechanism, using a phosphorylated active-site intermediate.</text>
</comment>
<comment type="catalytic activity">
    <reaction evidence="1">
        <text>a 2'-deoxyribonucleoside 5'-diphosphate + ATP = a 2'-deoxyribonucleoside 5'-triphosphate + ADP</text>
        <dbReference type="Rhea" id="RHEA:44640"/>
        <dbReference type="ChEBI" id="CHEBI:30616"/>
        <dbReference type="ChEBI" id="CHEBI:61560"/>
        <dbReference type="ChEBI" id="CHEBI:73316"/>
        <dbReference type="ChEBI" id="CHEBI:456216"/>
        <dbReference type="EC" id="2.7.4.6"/>
    </reaction>
</comment>
<comment type="catalytic activity">
    <reaction evidence="1">
        <text>a ribonucleoside 5'-diphosphate + ATP = a ribonucleoside 5'-triphosphate + ADP</text>
        <dbReference type="Rhea" id="RHEA:18113"/>
        <dbReference type="ChEBI" id="CHEBI:30616"/>
        <dbReference type="ChEBI" id="CHEBI:57930"/>
        <dbReference type="ChEBI" id="CHEBI:61557"/>
        <dbReference type="ChEBI" id="CHEBI:456216"/>
        <dbReference type="EC" id="2.7.4.6"/>
    </reaction>
</comment>
<comment type="cofactor">
    <cofactor evidence="1">
        <name>Mg(2+)</name>
        <dbReference type="ChEBI" id="CHEBI:18420"/>
    </cofactor>
</comment>
<comment type="subunit">
    <text evidence="1">Homotetramer.</text>
</comment>
<comment type="subcellular location">
    <subcellularLocation>
        <location evidence="1">Cytoplasm</location>
    </subcellularLocation>
</comment>
<comment type="similarity">
    <text evidence="1">Belongs to the NDK family.</text>
</comment>
<keyword id="KW-0067">ATP-binding</keyword>
<keyword id="KW-0963">Cytoplasm</keyword>
<keyword id="KW-0418">Kinase</keyword>
<keyword id="KW-0460">Magnesium</keyword>
<keyword id="KW-0479">Metal-binding</keyword>
<keyword id="KW-0546">Nucleotide metabolism</keyword>
<keyword id="KW-0547">Nucleotide-binding</keyword>
<keyword id="KW-0597">Phosphoprotein</keyword>
<keyword id="KW-1185">Reference proteome</keyword>
<keyword id="KW-0808">Transferase</keyword>
<protein>
    <recommendedName>
        <fullName evidence="1">Nucleoside diphosphate kinase</fullName>
        <shortName evidence="1">NDK</shortName>
        <shortName evidence="1">NDP kinase</shortName>
        <ecNumber evidence="1">2.7.4.6</ecNumber>
    </recommendedName>
    <alternativeName>
        <fullName evidence="1">Nucleoside-2-P kinase</fullName>
    </alternativeName>
</protein>
<gene>
    <name evidence="1" type="primary">ndk</name>
    <name type="ordered locus">ECA3224</name>
</gene>
<name>NDK_PECAS</name>
<feature type="chain" id="PRO_0000136983" description="Nucleoside diphosphate kinase">
    <location>
        <begin position="1"/>
        <end position="142"/>
    </location>
</feature>
<feature type="active site" description="Pros-phosphohistidine intermediate" evidence="1">
    <location>
        <position position="117"/>
    </location>
</feature>
<feature type="binding site" evidence="1">
    <location>
        <position position="11"/>
    </location>
    <ligand>
        <name>ATP</name>
        <dbReference type="ChEBI" id="CHEBI:30616"/>
    </ligand>
</feature>
<feature type="binding site" evidence="1">
    <location>
        <position position="59"/>
    </location>
    <ligand>
        <name>ATP</name>
        <dbReference type="ChEBI" id="CHEBI:30616"/>
    </ligand>
</feature>
<feature type="binding site" evidence="1">
    <location>
        <position position="87"/>
    </location>
    <ligand>
        <name>ATP</name>
        <dbReference type="ChEBI" id="CHEBI:30616"/>
    </ligand>
</feature>
<feature type="binding site" evidence="1">
    <location>
        <position position="93"/>
    </location>
    <ligand>
        <name>ATP</name>
        <dbReference type="ChEBI" id="CHEBI:30616"/>
    </ligand>
</feature>
<feature type="binding site" evidence="1">
    <location>
        <position position="104"/>
    </location>
    <ligand>
        <name>ATP</name>
        <dbReference type="ChEBI" id="CHEBI:30616"/>
    </ligand>
</feature>
<feature type="binding site" evidence="1">
    <location>
        <position position="114"/>
    </location>
    <ligand>
        <name>ATP</name>
        <dbReference type="ChEBI" id="CHEBI:30616"/>
    </ligand>
</feature>
<evidence type="ECO:0000255" key="1">
    <source>
        <dbReference type="HAMAP-Rule" id="MF_00451"/>
    </source>
</evidence>
<accession>Q6D272</accession>